<keyword id="KW-0067">ATP-binding</keyword>
<keyword id="KW-0119">Carbohydrate metabolism</keyword>
<keyword id="KW-0418">Kinase</keyword>
<keyword id="KW-0511">Multifunctional enzyme</keyword>
<keyword id="KW-0547">Nucleotide-binding</keyword>
<keyword id="KW-0548">Nucleotidyltransferase</keyword>
<keyword id="KW-1185">Reference proteome</keyword>
<keyword id="KW-0808">Transferase</keyword>
<evidence type="ECO:0000255" key="1">
    <source>
        <dbReference type="HAMAP-Rule" id="MF_01603"/>
    </source>
</evidence>
<comment type="function">
    <text evidence="1">Catalyzes the phosphorylation of D-glycero-D-manno-heptose 7-phosphate at the C-1 position to selectively form D-glycero-beta-D-manno-heptose-1,7-bisphosphate.</text>
</comment>
<comment type="function">
    <text evidence="1">Catalyzes the ADP transfer from ATP to D-glycero-beta-D-manno-heptose 1-phosphate, yielding ADP-D-glycero-beta-D-manno-heptose.</text>
</comment>
<comment type="catalytic activity">
    <reaction evidence="1">
        <text>D-glycero-beta-D-manno-heptose 7-phosphate + ATP = D-glycero-beta-D-manno-heptose 1,7-bisphosphate + ADP + H(+)</text>
        <dbReference type="Rhea" id="RHEA:27473"/>
        <dbReference type="ChEBI" id="CHEBI:15378"/>
        <dbReference type="ChEBI" id="CHEBI:30616"/>
        <dbReference type="ChEBI" id="CHEBI:60204"/>
        <dbReference type="ChEBI" id="CHEBI:60208"/>
        <dbReference type="ChEBI" id="CHEBI:456216"/>
        <dbReference type="EC" id="2.7.1.167"/>
    </reaction>
</comment>
<comment type="catalytic activity">
    <reaction evidence="1">
        <text>D-glycero-beta-D-manno-heptose 1-phosphate + ATP + H(+) = ADP-D-glycero-beta-D-manno-heptose + diphosphate</text>
        <dbReference type="Rhea" id="RHEA:27465"/>
        <dbReference type="ChEBI" id="CHEBI:15378"/>
        <dbReference type="ChEBI" id="CHEBI:30616"/>
        <dbReference type="ChEBI" id="CHEBI:33019"/>
        <dbReference type="ChEBI" id="CHEBI:59967"/>
        <dbReference type="ChEBI" id="CHEBI:61593"/>
        <dbReference type="EC" id="2.7.7.70"/>
    </reaction>
</comment>
<comment type="pathway">
    <text evidence="1">Nucleotide-sugar biosynthesis; ADP-L-glycero-beta-D-manno-heptose biosynthesis; ADP-L-glycero-beta-D-manno-heptose from D-glycero-beta-D-manno-heptose 7-phosphate: step 1/4.</text>
</comment>
<comment type="pathway">
    <text evidence="1">Nucleotide-sugar biosynthesis; ADP-L-glycero-beta-D-manno-heptose biosynthesis; ADP-L-glycero-beta-D-manno-heptose from D-glycero-beta-D-manno-heptose 7-phosphate: step 3/4.</text>
</comment>
<comment type="subunit">
    <text evidence="1">Homodimer.</text>
</comment>
<comment type="similarity">
    <text evidence="1">In the N-terminal section; belongs to the carbohydrate kinase PfkB family.</text>
</comment>
<comment type="similarity">
    <text evidence="1">In the C-terminal section; belongs to the cytidylyltransferase family.</text>
</comment>
<proteinExistence type="inferred from homology"/>
<sequence>MKVTLPAFEKARVLVVGDVMLDRYWVGPTGRISPEAPVPVVRINQIEDRPGGAANVALNIAALGGKVQLSGLVGQDDTADALTRGVQALGVEPHWLVVEDKPTITKLRVLSRNQQLIRLDFEEAFDKHSSDALLNQAQARLDDVDVVILSDYAKGAVGEPADFIASARAKGVKVLVDPKGSDFARYRGATLLTPNMSEFEAVVGTVTSEADLVDKAQKLLQDLALDALLVTRSEKGMTLITPNAPELHIPTVAREVYDVTGAGDTVISALATALGAGAELPQACAIANTAAGVVVGKLGTSTVSRIELIEALKSHQGESGIGVVSEDQLVYALEQAKLRGERVVMTNGCFDILHAGHVSYLAQAKALGDRLIVAVNDDDSVRRLKGDGRPVNSVDRRMAVLAGLASVDWVVPFSEDTPQRVIARLLPDLLVKGGDYKVEDIAGGAEVIANGGQVKVLGFEDGVSTTAIIQNIMSRH</sequence>
<protein>
    <recommendedName>
        <fullName evidence="1">Bifunctional protein HldE</fullName>
    </recommendedName>
    <domain>
        <recommendedName>
            <fullName evidence="1">D-beta-D-heptose 7-phosphate kinase</fullName>
            <ecNumber evidence="1">2.7.1.167</ecNumber>
        </recommendedName>
        <alternativeName>
            <fullName evidence="1">D-beta-D-heptose 7-phosphotransferase</fullName>
        </alternativeName>
        <alternativeName>
            <fullName evidence="1">D-glycero-beta-D-manno-heptose-7-phosphate kinase</fullName>
        </alternativeName>
    </domain>
    <domain>
        <recommendedName>
            <fullName evidence="1">D-beta-D-heptose 1-phosphate adenylyltransferase</fullName>
            <ecNumber evidence="1">2.7.7.70</ecNumber>
        </recommendedName>
        <alternativeName>
            <fullName evidence="1">D-glycero-beta-D-manno-heptose 1-phosphate adenylyltransferase</fullName>
        </alternativeName>
    </domain>
</protein>
<name>HLDE_SHEAM</name>
<feature type="chain" id="PRO_0000291686" description="Bifunctional protein HldE">
    <location>
        <begin position="1"/>
        <end position="476"/>
    </location>
</feature>
<feature type="region of interest" description="Ribokinase">
    <location>
        <begin position="1"/>
        <end position="319"/>
    </location>
</feature>
<feature type="region of interest" description="Cytidylyltransferase">
    <location>
        <begin position="345"/>
        <end position="476"/>
    </location>
</feature>
<feature type="active site" evidence="1">
    <location>
        <position position="264"/>
    </location>
</feature>
<feature type="binding site" evidence="1">
    <location>
        <begin position="195"/>
        <end position="198"/>
    </location>
    <ligand>
        <name>ATP</name>
        <dbReference type="ChEBI" id="CHEBI:30616"/>
    </ligand>
</feature>
<reference key="1">
    <citation type="submission" date="2006-12" db="EMBL/GenBank/DDBJ databases">
        <title>Complete sequence of Shewanella amazonensis SB2B.</title>
        <authorList>
            <consortium name="US DOE Joint Genome Institute"/>
            <person name="Copeland A."/>
            <person name="Lucas S."/>
            <person name="Lapidus A."/>
            <person name="Barry K."/>
            <person name="Detter J.C."/>
            <person name="Glavina del Rio T."/>
            <person name="Hammon N."/>
            <person name="Israni S."/>
            <person name="Dalin E."/>
            <person name="Tice H."/>
            <person name="Pitluck S."/>
            <person name="Munk A.C."/>
            <person name="Brettin T."/>
            <person name="Bruce D."/>
            <person name="Han C."/>
            <person name="Tapia R."/>
            <person name="Gilna P."/>
            <person name="Schmutz J."/>
            <person name="Larimer F."/>
            <person name="Land M."/>
            <person name="Hauser L."/>
            <person name="Kyrpides N."/>
            <person name="Mikhailova N."/>
            <person name="Fredrickson J."/>
            <person name="Richardson P."/>
        </authorList>
    </citation>
    <scope>NUCLEOTIDE SEQUENCE [LARGE SCALE GENOMIC DNA]</scope>
    <source>
        <strain>ATCC BAA-1098 / SB2B</strain>
    </source>
</reference>
<organism>
    <name type="scientific">Shewanella amazonensis (strain ATCC BAA-1098 / SB2B)</name>
    <dbReference type="NCBI Taxonomy" id="326297"/>
    <lineage>
        <taxon>Bacteria</taxon>
        <taxon>Pseudomonadati</taxon>
        <taxon>Pseudomonadota</taxon>
        <taxon>Gammaproteobacteria</taxon>
        <taxon>Alteromonadales</taxon>
        <taxon>Shewanellaceae</taxon>
        <taxon>Shewanella</taxon>
    </lineage>
</organism>
<dbReference type="EC" id="2.7.1.167" evidence="1"/>
<dbReference type="EC" id="2.7.7.70" evidence="1"/>
<dbReference type="EMBL" id="CP000507">
    <property type="protein sequence ID" value="ABL98939.1"/>
    <property type="molecule type" value="Genomic_DNA"/>
</dbReference>
<dbReference type="RefSeq" id="WP_011758849.1">
    <property type="nucleotide sequence ID" value="NC_008700.1"/>
</dbReference>
<dbReference type="SMR" id="A1S3I3"/>
<dbReference type="STRING" id="326297.Sama_0731"/>
<dbReference type="KEGG" id="saz:Sama_0731"/>
<dbReference type="eggNOG" id="COG0615">
    <property type="taxonomic scope" value="Bacteria"/>
</dbReference>
<dbReference type="eggNOG" id="COG2870">
    <property type="taxonomic scope" value="Bacteria"/>
</dbReference>
<dbReference type="HOGENOM" id="CLU_021150_2_1_6"/>
<dbReference type="OrthoDB" id="9802794at2"/>
<dbReference type="UniPathway" id="UPA00356">
    <property type="reaction ID" value="UER00437"/>
</dbReference>
<dbReference type="UniPathway" id="UPA00356">
    <property type="reaction ID" value="UER00439"/>
</dbReference>
<dbReference type="Proteomes" id="UP000009175">
    <property type="component" value="Chromosome"/>
</dbReference>
<dbReference type="GO" id="GO:0005829">
    <property type="term" value="C:cytosol"/>
    <property type="evidence" value="ECO:0007669"/>
    <property type="project" value="TreeGrafter"/>
</dbReference>
<dbReference type="GO" id="GO:0005524">
    <property type="term" value="F:ATP binding"/>
    <property type="evidence" value="ECO:0007669"/>
    <property type="project" value="UniProtKB-UniRule"/>
</dbReference>
<dbReference type="GO" id="GO:0033785">
    <property type="term" value="F:heptose 7-phosphate kinase activity"/>
    <property type="evidence" value="ECO:0007669"/>
    <property type="project" value="UniProtKB-UniRule"/>
</dbReference>
<dbReference type="GO" id="GO:0033786">
    <property type="term" value="F:heptose-1-phosphate adenylyltransferase activity"/>
    <property type="evidence" value="ECO:0007669"/>
    <property type="project" value="UniProtKB-UniRule"/>
</dbReference>
<dbReference type="GO" id="GO:0016773">
    <property type="term" value="F:phosphotransferase activity, alcohol group as acceptor"/>
    <property type="evidence" value="ECO:0007669"/>
    <property type="project" value="InterPro"/>
</dbReference>
<dbReference type="GO" id="GO:0097171">
    <property type="term" value="P:ADP-L-glycero-beta-D-manno-heptose biosynthetic process"/>
    <property type="evidence" value="ECO:0007669"/>
    <property type="project" value="UniProtKB-UniPathway"/>
</dbReference>
<dbReference type="CDD" id="cd01172">
    <property type="entry name" value="RfaE_like"/>
    <property type="match status" value="1"/>
</dbReference>
<dbReference type="FunFam" id="3.40.1190.20:FF:000002">
    <property type="entry name" value="Bifunctional protein HldE"/>
    <property type="match status" value="1"/>
</dbReference>
<dbReference type="FunFam" id="3.40.50.620:FF:000028">
    <property type="entry name" value="Bifunctional protein HldE"/>
    <property type="match status" value="1"/>
</dbReference>
<dbReference type="Gene3D" id="3.40.1190.20">
    <property type="match status" value="1"/>
</dbReference>
<dbReference type="Gene3D" id="3.40.50.620">
    <property type="entry name" value="HUPs"/>
    <property type="match status" value="1"/>
</dbReference>
<dbReference type="HAMAP" id="MF_01603">
    <property type="entry name" value="HldE"/>
    <property type="match status" value="1"/>
</dbReference>
<dbReference type="InterPro" id="IPR023030">
    <property type="entry name" value="Bifunc_HldE"/>
</dbReference>
<dbReference type="InterPro" id="IPR002173">
    <property type="entry name" value="Carboh/pur_kinase_PfkB_CS"/>
</dbReference>
<dbReference type="InterPro" id="IPR004821">
    <property type="entry name" value="Cyt_trans-like"/>
</dbReference>
<dbReference type="InterPro" id="IPR011611">
    <property type="entry name" value="PfkB_dom"/>
</dbReference>
<dbReference type="InterPro" id="IPR011913">
    <property type="entry name" value="RfaE_dom_I"/>
</dbReference>
<dbReference type="InterPro" id="IPR011914">
    <property type="entry name" value="RfaE_dom_II"/>
</dbReference>
<dbReference type="InterPro" id="IPR029056">
    <property type="entry name" value="Ribokinase-like"/>
</dbReference>
<dbReference type="InterPro" id="IPR014729">
    <property type="entry name" value="Rossmann-like_a/b/a_fold"/>
</dbReference>
<dbReference type="NCBIfam" id="TIGR00125">
    <property type="entry name" value="cyt_tran_rel"/>
    <property type="match status" value="1"/>
</dbReference>
<dbReference type="NCBIfam" id="NF008454">
    <property type="entry name" value="PRK11316.1"/>
    <property type="match status" value="1"/>
</dbReference>
<dbReference type="NCBIfam" id="TIGR02198">
    <property type="entry name" value="rfaE_dom_I"/>
    <property type="match status" value="1"/>
</dbReference>
<dbReference type="NCBIfam" id="TIGR02199">
    <property type="entry name" value="rfaE_dom_II"/>
    <property type="match status" value="1"/>
</dbReference>
<dbReference type="PANTHER" id="PTHR46969">
    <property type="entry name" value="BIFUNCTIONAL PROTEIN HLDE"/>
    <property type="match status" value="1"/>
</dbReference>
<dbReference type="PANTHER" id="PTHR46969:SF1">
    <property type="entry name" value="BIFUNCTIONAL PROTEIN HLDE"/>
    <property type="match status" value="1"/>
</dbReference>
<dbReference type="Pfam" id="PF01467">
    <property type="entry name" value="CTP_transf_like"/>
    <property type="match status" value="1"/>
</dbReference>
<dbReference type="Pfam" id="PF00294">
    <property type="entry name" value="PfkB"/>
    <property type="match status" value="1"/>
</dbReference>
<dbReference type="SUPFAM" id="SSF52374">
    <property type="entry name" value="Nucleotidylyl transferase"/>
    <property type="match status" value="1"/>
</dbReference>
<dbReference type="SUPFAM" id="SSF53613">
    <property type="entry name" value="Ribokinase-like"/>
    <property type="match status" value="1"/>
</dbReference>
<dbReference type="PROSITE" id="PS00583">
    <property type="entry name" value="PFKB_KINASES_1"/>
    <property type="match status" value="1"/>
</dbReference>
<dbReference type="PROSITE" id="PS00584">
    <property type="entry name" value="PFKB_KINASES_2"/>
    <property type="match status" value="1"/>
</dbReference>
<accession>A1S3I3</accession>
<gene>
    <name evidence="1" type="primary">hldE</name>
    <name type="ordered locus">Sama_0731</name>
</gene>